<name>HIS1_THEP1</name>
<organism>
    <name type="scientific">Thermotoga petrophila (strain ATCC BAA-488 / DSM 13995 / JCM 10881 / RKU-1)</name>
    <dbReference type="NCBI Taxonomy" id="390874"/>
    <lineage>
        <taxon>Bacteria</taxon>
        <taxon>Thermotogati</taxon>
        <taxon>Thermotogota</taxon>
        <taxon>Thermotogae</taxon>
        <taxon>Thermotogales</taxon>
        <taxon>Thermotogaceae</taxon>
        <taxon>Thermotoga</taxon>
    </lineage>
</organism>
<gene>
    <name evidence="1" type="primary">hisG</name>
    <name type="ordered locus">Tpet_1708</name>
</gene>
<feature type="chain" id="PRO_1000063319" description="ATP phosphoribosyltransferase">
    <location>
        <begin position="1"/>
        <end position="208"/>
    </location>
</feature>
<dbReference type="EC" id="2.4.2.17" evidence="1"/>
<dbReference type="EMBL" id="CP000702">
    <property type="protein sequence ID" value="ABQ47713.1"/>
    <property type="molecule type" value="Genomic_DNA"/>
</dbReference>
<dbReference type="RefSeq" id="WP_011944119.1">
    <property type="nucleotide sequence ID" value="NC_009486.1"/>
</dbReference>
<dbReference type="SMR" id="A5INE0"/>
<dbReference type="STRING" id="390874.Tpet_1708"/>
<dbReference type="KEGG" id="tpt:Tpet_1708"/>
<dbReference type="eggNOG" id="COG0040">
    <property type="taxonomic scope" value="Bacteria"/>
</dbReference>
<dbReference type="HOGENOM" id="CLU_038115_2_0_0"/>
<dbReference type="UniPathway" id="UPA00031">
    <property type="reaction ID" value="UER00006"/>
</dbReference>
<dbReference type="Proteomes" id="UP000006558">
    <property type="component" value="Chromosome"/>
</dbReference>
<dbReference type="GO" id="GO:0005737">
    <property type="term" value="C:cytoplasm"/>
    <property type="evidence" value="ECO:0007669"/>
    <property type="project" value="UniProtKB-SubCell"/>
</dbReference>
<dbReference type="GO" id="GO:0005524">
    <property type="term" value="F:ATP binding"/>
    <property type="evidence" value="ECO:0007669"/>
    <property type="project" value="UniProtKB-KW"/>
</dbReference>
<dbReference type="GO" id="GO:0003879">
    <property type="term" value="F:ATP phosphoribosyltransferase activity"/>
    <property type="evidence" value="ECO:0007669"/>
    <property type="project" value="UniProtKB-UniRule"/>
</dbReference>
<dbReference type="GO" id="GO:0000105">
    <property type="term" value="P:L-histidine biosynthetic process"/>
    <property type="evidence" value="ECO:0007669"/>
    <property type="project" value="UniProtKB-UniRule"/>
</dbReference>
<dbReference type="CDD" id="cd13595">
    <property type="entry name" value="PBP2_HisGs"/>
    <property type="match status" value="1"/>
</dbReference>
<dbReference type="FunFam" id="3.40.190.10:FF:000008">
    <property type="entry name" value="ATP phosphoribosyltransferase"/>
    <property type="match status" value="1"/>
</dbReference>
<dbReference type="Gene3D" id="3.40.190.10">
    <property type="entry name" value="Periplasmic binding protein-like II"/>
    <property type="match status" value="2"/>
</dbReference>
<dbReference type="HAMAP" id="MF_01018">
    <property type="entry name" value="HisG_Short"/>
    <property type="match status" value="1"/>
</dbReference>
<dbReference type="InterPro" id="IPR013820">
    <property type="entry name" value="ATP_PRibTrfase_cat"/>
</dbReference>
<dbReference type="InterPro" id="IPR018198">
    <property type="entry name" value="ATP_PRibTrfase_CS"/>
</dbReference>
<dbReference type="InterPro" id="IPR001348">
    <property type="entry name" value="ATP_PRibTrfase_HisG"/>
</dbReference>
<dbReference type="InterPro" id="IPR024893">
    <property type="entry name" value="ATP_PRibTrfase_HisG_short"/>
</dbReference>
<dbReference type="NCBIfam" id="TIGR00070">
    <property type="entry name" value="hisG"/>
    <property type="match status" value="1"/>
</dbReference>
<dbReference type="PANTHER" id="PTHR21403:SF8">
    <property type="entry name" value="ATP PHOSPHORIBOSYLTRANSFERASE"/>
    <property type="match status" value="1"/>
</dbReference>
<dbReference type="PANTHER" id="PTHR21403">
    <property type="entry name" value="ATP PHOSPHORIBOSYLTRANSFERASE ATP-PRTASE"/>
    <property type="match status" value="1"/>
</dbReference>
<dbReference type="Pfam" id="PF01634">
    <property type="entry name" value="HisG"/>
    <property type="match status" value="1"/>
</dbReference>
<dbReference type="SUPFAM" id="SSF53850">
    <property type="entry name" value="Periplasmic binding protein-like II"/>
    <property type="match status" value="1"/>
</dbReference>
<dbReference type="PROSITE" id="PS01316">
    <property type="entry name" value="ATP_P_PHORIBOSYLTR"/>
    <property type="match status" value="1"/>
</dbReference>
<reference key="1">
    <citation type="submission" date="2007-05" db="EMBL/GenBank/DDBJ databases">
        <title>Complete sequence of Thermotoga petrophila RKU-1.</title>
        <authorList>
            <consortium name="US DOE Joint Genome Institute"/>
            <person name="Copeland A."/>
            <person name="Lucas S."/>
            <person name="Lapidus A."/>
            <person name="Barry K."/>
            <person name="Glavina del Rio T."/>
            <person name="Dalin E."/>
            <person name="Tice H."/>
            <person name="Pitluck S."/>
            <person name="Sims D."/>
            <person name="Brettin T."/>
            <person name="Bruce D."/>
            <person name="Detter J.C."/>
            <person name="Han C."/>
            <person name="Tapia R."/>
            <person name="Schmutz J."/>
            <person name="Larimer F."/>
            <person name="Land M."/>
            <person name="Hauser L."/>
            <person name="Kyrpides N."/>
            <person name="Mikhailova N."/>
            <person name="Nelson K."/>
            <person name="Gogarten J.P."/>
            <person name="Noll K."/>
            <person name="Richardson P."/>
        </authorList>
    </citation>
    <scope>NUCLEOTIDE SEQUENCE [LARGE SCALE GENOMIC DNA]</scope>
    <source>
        <strain>ATCC BAA-488 / DSM 13995 / JCM 10881 / RKU-1</strain>
    </source>
</reference>
<evidence type="ECO:0000255" key="1">
    <source>
        <dbReference type="HAMAP-Rule" id="MF_01018"/>
    </source>
</evidence>
<protein>
    <recommendedName>
        <fullName evidence="1">ATP phosphoribosyltransferase</fullName>
        <shortName evidence="1">ATP-PRT</shortName>
        <shortName evidence="1">ATP-PRTase</shortName>
        <ecNumber evidence="1">2.4.2.17</ecNumber>
    </recommendedName>
</protein>
<proteinExistence type="inferred from homology"/>
<sequence>MLKLAIPKGRLEEKVMTYLKKTGFTFERESSILREGKDIVCFMVRPFDVPTYLVHGVADIGFCGTDVLLEKETSLIQPFFIPTNISRMVLAGPKGKGIPEGEKRIATKFPNVTQRYCETRGWHCRIIPLKGSVELAPIAGLADLIVDITETGRTLKENNLEILDEIFVIRTHVVVNPVSYRTKREEVVSFLEKLQEVIEHDFDEQPRR</sequence>
<keyword id="KW-0028">Amino-acid biosynthesis</keyword>
<keyword id="KW-0067">ATP-binding</keyword>
<keyword id="KW-0963">Cytoplasm</keyword>
<keyword id="KW-0328">Glycosyltransferase</keyword>
<keyword id="KW-0368">Histidine biosynthesis</keyword>
<keyword id="KW-0547">Nucleotide-binding</keyword>
<keyword id="KW-0808">Transferase</keyword>
<comment type="function">
    <text evidence="1">Catalyzes the condensation of ATP and 5-phosphoribose 1-diphosphate to form N'-(5'-phosphoribosyl)-ATP (PR-ATP). Has a crucial role in the pathway because the rate of histidine biosynthesis seems to be controlled primarily by regulation of HisG enzymatic activity.</text>
</comment>
<comment type="catalytic activity">
    <reaction evidence="1">
        <text>1-(5-phospho-beta-D-ribosyl)-ATP + diphosphate = 5-phospho-alpha-D-ribose 1-diphosphate + ATP</text>
        <dbReference type="Rhea" id="RHEA:18473"/>
        <dbReference type="ChEBI" id="CHEBI:30616"/>
        <dbReference type="ChEBI" id="CHEBI:33019"/>
        <dbReference type="ChEBI" id="CHEBI:58017"/>
        <dbReference type="ChEBI" id="CHEBI:73183"/>
        <dbReference type="EC" id="2.4.2.17"/>
    </reaction>
</comment>
<comment type="pathway">
    <text evidence="1">Amino-acid biosynthesis; L-histidine biosynthesis; L-histidine from 5-phospho-alpha-D-ribose 1-diphosphate: step 1/9.</text>
</comment>
<comment type="subunit">
    <text evidence="1">Heteromultimer composed of HisG and HisZ subunits.</text>
</comment>
<comment type="subcellular location">
    <subcellularLocation>
        <location evidence="1">Cytoplasm</location>
    </subcellularLocation>
</comment>
<comment type="domain">
    <text>Lacks the C-terminal regulatory region which is replaced by HisZ.</text>
</comment>
<comment type="similarity">
    <text evidence="1">Belongs to the ATP phosphoribosyltransferase family. Short subfamily.</text>
</comment>
<accession>A5INE0</accession>